<keyword id="KW-0067">ATP-binding</keyword>
<keyword id="KW-0547">Nucleotide-binding</keyword>
<keyword id="KW-0614">Plasmid</keyword>
<keyword id="KW-1185">Reference proteome</keyword>
<keyword id="KW-0808">Transferase</keyword>
<dbReference type="EC" id="2.7.4.23" evidence="1"/>
<dbReference type="EMBL" id="CP000376">
    <property type="protein sequence ID" value="ABF62664.1"/>
    <property type="molecule type" value="Genomic_DNA"/>
</dbReference>
<dbReference type="RefSeq" id="WP_011537303.1">
    <property type="nucleotide sequence ID" value="NC_008043.1"/>
</dbReference>
<dbReference type="SMR" id="Q1GL02"/>
<dbReference type="KEGG" id="sit:TM1040_3697"/>
<dbReference type="HOGENOM" id="CLU_102477_0_0_5"/>
<dbReference type="OrthoDB" id="341217at2"/>
<dbReference type="UniPathway" id="UPA00087">
    <property type="reaction ID" value="UER00175"/>
</dbReference>
<dbReference type="Proteomes" id="UP000000636">
    <property type="component" value="Plasmid megaplasmid TM1040"/>
</dbReference>
<dbReference type="GO" id="GO:0005829">
    <property type="term" value="C:cytosol"/>
    <property type="evidence" value="ECO:0007669"/>
    <property type="project" value="TreeGrafter"/>
</dbReference>
<dbReference type="GO" id="GO:0005524">
    <property type="term" value="F:ATP binding"/>
    <property type="evidence" value="ECO:0007669"/>
    <property type="project" value="UniProtKB-KW"/>
</dbReference>
<dbReference type="GO" id="GO:0033863">
    <property type="term" value="F:ribose 1,5-bisphosphate phosphokinase activity"/>
    <property type="evidence" value="ECO:0007669"/>
    <property type="project" value="UniProtKB-UniRule"/>
</dbReference>
<dbReference type="GO" id="GO:0006015">
    <property type="term" value="P:5-phosphoribose 1-diphosphate biosynthetic process"/>
    <property type="evidence" value="ECO:0007669"/>
    <property type="project" value="UniProtKB-UniRule"/>
</dbReference>
<dbReference type="GO" id="GO:0019634">
    <property type="term" value="P:organic phosphonate metabolic process"/>
    <property type="evidence" value="ECO:0007669"/>
    <property type="project" value="UniProtKB-UniRule"/>
</dbReference>
<dbReference type="Gene3D" id="3.40.50.300">
    <property type="entry name" value="P-loop containing nucleotide triphosphate hydrolases"/>
    <property type="match status" value="1"/>
</dbReference>
<dbReference type="HAMAP" id="MF_00836">
    <property type="entry name" value="PhnN"/>
    <property type="match status" value="1"/>
</dbReference>
<dbReference type="InterPro" id="IPR008145">
    <property type="entry name" value="GK/Ca_channel_bsu"/>
</dbReference>
<dbReference type="InterPro" id="IPR008144">
    <property type="entry name" value="Guanylate_kin-like_dom"/>
</dbReference>
<dbReference type="InterPro" id="IPR027417">
    <property type="entry name" value="P-loop_NTPase"/>
</dbReference>
<dbReference type="InterPro" id="IPR012699">
    <property type="entry name" value="PhnN"/>
</dbReference>
<dbReference type="NCBIfam" id="TIGR02322">
    <property type="entry name" value="phosphon_PhnN"/>
    <property type="match status" value="1"/>
</dbReference>
<dbReference type="PANTHER" id="PTHR23117">
    <property type="entry name" value="GUANYLATE KINASE-RELATED"/>
    <property type="match status" value="1"/>
</dbReference>
<dbReference type="PANTHER" id="PTHR23117:SF8">
    <property type="entry name" value="RIBOSE 1,5-BISPHOSPHATE PHOSPHOKINASE PHNN"/>
    <property type="match status" value="1"/>
</dbReference>
<dbReference type="SMART" id="SM00072">
    <property type="entry name" value="GuKc"/>
    <property type="match status" value="1"/>
</dbReference>
<dbReference type="SUPFAM" id="SSF52540">
    <property type="entry name" value="P-loop containing nucleoside triphosphate hydrolases"/>
    <property type="match status" value="1"/>
</dbReference>
<dbReference type="PROSITE" id="PS50052">
    <property type="entry name" value="GUANYLATE_KINASE_2"/>
    <property type="match status" value="1"/>
</dbReference>
<organism>
    <name type="scientific">Ruegeria sp. (strain TM1040)</name>
    <name type="common">Silicibacter sp.</name>
    <dbReference type="NCBI Taxonomy" id="292414"/>
    <lineage>
        <taxon>Bacteria</taxon>
        <taxon>Pseudomonadati</taxon>
        <taxon>Pseudomonadota</taxon>
        <taxon>Alphaproteobacteria</taxon>
        <taxon>Rhodobacterales</taxon>
        <taxon>Roseobacteraceae</taxon>
        <taxon>Ruegeria</taxon>
    </lineage>
</organism>
<name>PHNN_RUEST</name>
<proteinExistence type="inferred from homology"/>
<gene>
    <name evidence="1" type="primary">phnN</name>
    <name type="ordered locus">TM1040_3697</name>
</gene>
<feature type="chain" id="PRO_0000412801" description="Ribose 1,5-bisphosphate phosphokinase PhnN">
    <location>
        <begin position="1"/>
        <end position="190"/>
    </location>
</feature>
<feature type="binding site" evidence="1">
    <location>
        <begin position="19"/>
        <end position="26"/>
    </location>
    <ligand>
        <name>ATP</name>
        <dbReference type="ChEBI" id="CHEBI:30616"/>
    </ligand>
</feature>
<sequence>MSVPADTSPAKGPVIAVVGPSGVGKDSLMSGLAVADPRLRSMRRVITRAPEAGGEDYQPVSEAEFQALVEADVFALHWNAHGLRYGIPRDIEKLREGATGVLVNLSRAVLLQAQEVFDDFRVISVTARPEVLAARLAGRGREDAAEVERRLARASLALPEGLRQVHEVDNSGALSAAIVEAQAIIQAERA</sequence>
<evidence type="ECO:0000255" key="1">
    <source>
        <dbReference type="HAMAP-Rule" id="MF_00836"/>
    </source>
</evidence>
<accession>Q1GL02</accession>
<protein>
    <recommendedName>
        <fullName evidence="1">Ribose 1,5-bisphosphate phosphokinase PhnN</fullName>
        <ecNumber evidence="1">2.7.4.23</ecNumber>
    </recommendedName>
    <alternativeName>
        <fullName evidence="1">Ribose 1,5-bisphosphokinase</fullName>
    </alternativeName>
</protein>
<geneLocation type="plasmid">
    <name>megaplasmid TM1040</name>
</geneLocation>
<comment type="function">
    <text evidence="1">Catalyzes the phosphorylation of ribose 1,5-bisphosphate to 5-phospho-D-ribosyl alpha-1-diphosphate (PRPP).</text>
</comment>
<comment type="catalytic activity">
    <reaction evidence="1">
        <text>alpha-D-ribose 1,5-bisphosphate + ATP = 5-phospho-alpha-D-ribose 1-diphosphate + ADP</text>
        <dbReference type="Rhea" id="RHEA:20109"/>
        <dbReference type="ChEBI" id="CHEBI:30616"/>
        <dbReference type="ChEBI" id="CHEBI:58017"/>
        <dbReference type="ChEBI" id="CHEBI:68688"/>
        <dbReference type="ChEBI" id="CHEBI:456216"/>
        <dbReference type="EC" id="2.7.4.23"/>
    </reaction>
</comment>
<comment type="pathway">
    <text evidence="1">Metabolic intermediate biosynthesis; 5-phospho-alpha-D-ribose 1-diphosphate biosynthesis; 5-phospho-alpha-D-ribose 1-diphosphate from D-ribose 5-phosphate (route II): step 3/3.</text>
</comment>
<comment type="similarity">
    <text evidence="1">Belongs to the ribose 1,5-bisphosphokinase family.</text>
</comment>
<reference key="1">
    <citation type="submission" date="2006-05" db="EMBL/GenBank/DDBJ databases">
        <title>Complete sequence of megaplasmid of Silicibacter sp. TM1040.</title>
        <authorList>
            <consortium name="US DOE Joint Genome Institute"/>
            <person name="Copeland A."/>
            <person name="Lucas S."/>
            <person name="Lapidus A."/>
            <person name="Barry K."/>
            <person name="Detter J.C."/>
            <person name="Glavina del Rio T."/>
            <person name="Hammon N."/>
            <person name="Israni S."/>
            <person name="Dalin E."/>
            <person name="Tice H."/>
            <person name="Pitluck S."/>
            <person name="Brettin T."/>
            <person name="Bruce D."/>
            <person name="Han C."/>
            <person name="Tapia R."/>
            <person name="Goodwin L."/>
            <person name="Thompson L.S."/>
            <person name="Gilna P."/>
            <person name="Schmutz J."/>
            <person name="Larimer F."/>
            <person name="Land M."/>
            <person name="Hauser L."/>
            <person name="Kyrpides N."/>
            <person name="Kim E."/>
            <person name="Belas R."/>
            <person name="Moran M.A."/>
            <person name="Buchan A."/>
            <person name="Gonzalez J.M."/>
            <person name="Schell M.A."/>
            <person name="Sun F."/>
            <person name="Richardson P."/>
        </authorList>
    </citation>
    <scope>NUCLEOTIDE SEQUENCE [LARGE SCALE GENOMIC DNA]</scope>
    <source>
        <strain>TM1040</strain>
    </source>
</reference>